<name>RL10E_THEPD</name>
<feature type="chain" id="PRO_1000026198" description="Large ribosomal subunit protein uL16">
    <location>
        <begin position="1"/>
        <end position="168"/>
    </location>
</feature>
<evidence type="ECO:0000255" key="1">
    <source>
        <dbReference type="HAMAP-Rule" id="MF_00448"/>
    </source>
</evidence>
<evidence type="ECO:0000305" key="2"/>
<gene>
    <name evidence="1" type="primary">rpl10e</name>
    <name type="ordered locus">Tpen_0546</name>
</gene>
<dbReference type="EMBL" id="CP000505">
    <property type="protein sequence ID" value="ABL77952.1"/>
    <property type="molecule type" value="Genomic_DNA"/>
</dbReference>
<dbReference type="RefSeq" id="WP_011752217.1">
    <property type="nucleotide sequence ID" value="NC_008698.1"/>
</dbReference>
<dbReference type="SMR" id="A1RXM2"/>
<dbReference type="STRING" id="368408.Tpen_0546"/>
<dbReference type="EnsemblBacteria" id="ABL77952">
    <property type="protein sequence ID" value="ABL77952"/>
    <property type="gene ID" value="Tpen_0546"/>
</dbReference>
<dbReference type="GeneID" id="4600503"/>
<dbReference type="KEGG" id="tpe:Tpen_0546"/>
<dbReference type="eggNOG" id="arCOG04113">
    <property type="taxonomic scope" value="Archaea"/>
</dbReference>
<dbReference type="HOGENOM" id="CLU_084051_0_2_2"/>
<dbReference type="OrthoDB" id="30538at2157"/>
<dbReference type="Proteomes" id="UP000000641">
    <property type="component" value="Chromosome"/>
</dbReference>
<dbReference type="GO" id="GO:1990904">
    <property type="term" value="C:ribonucleoprotein complex"/>
    <property type="evidence" value="ECO:0007669"/>
    <property type="project" value="UniProtKB-KW"/>
</dbReference>
<dbReference type="GO" id="GO:0005840">
    <property type="term" value="C:ribosome"/>
    <property type="evidence" value="ECO:0007669"/>
    <property type="project" value="UniProtKB-KW"/>
</dbReference>
<dbReference type="GO" id="GO:0003735">
    <property type="term" value="F:structural constituent of ribosome"/>
    <property type="evidence" value="ECO:0007669"/>
    <property type="project" value="InterPro"/>
</dbReference>
<dbReference type="GO" id="GO:0006412">
    <property type="term" value="P:translation"/>
    <property type="evidence" value="ECO:0007669"/>
    <property type="project" value="UniProtKB-UniRule"/>
</dbReference>
<dbReference type="CDD" id="cd01433">
    <property type="entry name" value="Ribosomal_L16_L10e"/>
    <property type="match status" value="1"/>
</dbReference>
<dbReference type="Gene3D" id="3.90.1170.10">
    <property type="entry name" value="Ribosomal protein L10e/L16"/>
    <property type="match status" value="1"/>
</dbReference>
<dbReference type="HAMAP" id="MF_00448">
    <property type="entry name" value="Ribosomal_uL16_arch"/>
    <property type="match status" value="1"/>
</dbReference>
<dbReference type="InterPro" id="IPR047873">
    <property type="entry name" value="Ribosomal_uL16"/>
</dbReference>
<dbReference type="InterPro" id="IPR022981">
    <property type="entry name" value="Ribosomal_uL16_arc"/>
</dbReference>
<dbReference type="InterPro" id="IPR018255">
    <property type="entry name" value="Ribosomal_uL16_CS_euk_arc"/>
</dbReference>
<dbReference type="InterPro" id="IPR016180">
    <property type="entry name" value="Ribosomal_uL16_dom"/>
</dbReference>
<dbReference type="InterPro" id="IPR001197">
    <property type="entry name" value="Ribosomal_uL16_euk_arch"/>
</dbReference>
<dbReference type="InterPro" id="IPR036920">
    <property type="entry name" value="Ribosomal_uL16_sf"/>
</dbReference>
<dbReference type="NCBIfam" id="NF003236">
    <property type="entry name" value="PRK04199.1-1"/>
    <property type="match status" value="1"/>
</dbReference>
<dbReference type="NCBIfam" id="NF003239">
    <property type="entry name" value="PRK04199.1-4"/>
    <property type="match status" value="1"/>
</dbReference>
<dbReference type="PANTHER" id="PTHR11726">
    <property type="entry name" value="60S RIBOSOMAL PROTEIN L10"/>
    <property type="match status" value="1"/>
</dbReference>
<dbReference type="Pfam" id="PF00252">
    <property type="entry name" value="Ribosomal_L16"/>
    <property type="match status" value="1"/>
</dbReference>
<dbReference type="PIRSF" id="PIRSF005590">
    <property type="entry name" value="Ribosomal_L10"/>
    <property type="match status" value="1"/>
</dbReference>
<dbReference type="SUPFAM" id="SSF54686">
    <property type="entry name" value="Ribosomal protein L16p/L10e"/>
    <property type="match status" value="1"/>
</dbReference>
<dbReference type="PROSITE" id="PS01257">
    <property type="entry name" value="RIBOSOMAL_L10E"/>
    <property type="match status" value="1"/>
</dbReference>
<comment type="similarity">
    <text evidence="1">Belongs to the universal ribosomal protein uL16 family.</text>
</comment>
<proteinExistence type="inferred from homology"/>
<protein>
    <recommendedName>
        <fullName evidence="1">Large ribosomal subunit protein uL16</fullName>
    </recommendedName>
    <alternativeName>
        <fullName evidence="2">50S ribosomal protein L10e</fullName>
    </alternativeName>
</protein>
<keyword id="KW-1185">Reference proteome</keyword>
<keyword id="KW-0687">Ribonucleoprotein</keyword>
<keyword id="KW-0689">Ribosomal protein</keyword>
<accession>A1RXM2</accession>
<reference key="1">
    <citation type="journal article" date="2008" name="J. Bacteriol.">
        <title>Genome sequence of Thermofilum pendens reveals an exceptional loss of biosynthetic pathways without genome reduction.</title>
        <authorList>
            <person name="Anderson I."/>
            <person name="Rodriguez J."/>
            <person name="Susanti D."/>
            <person name="Porat I."/>
            <person name="Reich C."/>
            <person name="Ulrich L.E."/>
            <person name="Elkins J.G."/>
            <person name="Mavromatis K."/>
            <person name="Lykidis A."/>
            <person name="Kim E."/>
            <person name="Thompson L.S."/>
            <person name="Nolan M."/>
            <person name="Land M."/>
            <person name="Copeland A."/>
            <person name="Lapidus A."/>
            <person name="Lucas S."/>
            <person name="Detter C."/>
            <person name="Zhulin I.B."/>
            <person name="Olsen G.J."/>
            <person name="Whitman W."/>
            <person name="Mukhopadhyay B."/>
            <person name="Bristow J."/>
            <person name="Kyrpides N."/>
        </authorList>
    </citation>
    <scope>NUCLEOTIDE SEQUENCE [LARGE SCALE GENOMIC DNA]</scope>
    <source>
        <strain>DSM 2475 / Hrk 5</strain>
    </source>
</reference>
<sequence length="168" mass="18762">MPLRPGRCYRHFGTPPYTRLEYIKSNPPVLIPKFDLGNPKGNFNTVLKLVVMRPGQIRANALEAARQHANKYLTAKVGEANFFLRVAVFPHHILRENKMMAMAGADRLQDGMRLSFGTPVGRAARVEAGQIVMLVKVDAKNIDHAKEALRRAASKIPLPSRIIVEQAQ</sequence>
<organism>
    <name type="scientific">Thermofilum pendens (strain DSM 2475 / Hrk 5)</name>
    <dbReference type="NCBI Taxonomy" id="368408"/>
    <lineage>
        <taxon>Archaea</taxon>
        <taxon>Thermoproteota</taxon>
        <taxon>Thermoprotei</taxon>
        <taxon>Thermofilales</taxon>
        <taxon>Thermofilaceae</taxon>
        <taxon>Thermofilum</taxon>
    </lineage>
</organism>